<protein>
    <recommendedName>
        <fullName evidence="3">Communesin biosynthesis cluster-specific transcription factor cnsN</fullName>
    </recommendedName>
    <alternativeName>
        <fullName evidence="3">Communesin biosynthesis cluster protein N</fullName>
    </alternativeName>
</protein>
<sequence length="953" mass="105072">MRPLPTGIYTPLPCFFHENEDIDIEALQSHVKFIASAGTIPVVSGSMGEAIHLNREEKKTIIRSARVALDEVNLHDVPIVAGAGGASTRESIELCKDAAEAGADYVMVIPPGYYAGALLADTSSIKKFFVDIAEASPLPVIIYNFPAVSGGIDMDSDLIVQIIQSSANICGVKLTCANVGKLTRIMAQVSRPEFQAAFPRSSATPFRAIDGFIDFLLPSISVGSAGAISGLPNIAPKSCVKLWNLCQDSGSSKQATELQNLIALADGVALKIGIAGMKKLLHRHFGRKVACDMPNGPPCLRCTNKYQECTFEEGPGPRKRARLCEQTETFGTCEQPDGWQDLLTETRPNIGQSEDLEAVSPQGSLLGANQELESTSPRTSHSSLSQDDTASLHSRSSLSSSPGRFPPSQKLVATSDSPSQINSLEFIPDAFSFYIGPTGVTDIHILSHQKYNDQNVSLPKVNGLKYRIMDNPGQKEMATVDFSPPTVFGITDHSLLEKAEPKLDPQLTENGWPRLWAMMDPTAAWHLIKLYSRYIDPYFPILSSHQIPSSSAELNKMPLALLTAICATALPFVMYDDSLYTMLLNPPSSEELYRLCWLCISQELHAPSLATLQACLLLQQRLPTNMYLSDTAFAWTLMATSLAVAQTIGLHRDTGSWTSIPAWEKRLRRRLWWGLYAMEKWVALARGMPSHLGDDDYDVSMLKADDIQDTLSDSPDTQSHIYHLSNLSTILSDIQRSFYSVKAIGKTSNDLQYSLDLARPMRVRLKDWRDNLPSNLRPVSNAVISGEDLDGNGSLYLSYIVTHVALLRALLRPLDRWPAIIKVNKEEPEATYEGAKAVVTGALLCVKEFVEFVERLTGAQWNAFWHSWSRPNFAIAGSFMVHLLQIVTPPNQTDSQSMPELLKYSFEKEHTELQDWIRRWRWATRISANGAAGVKGLTNLGFIKVETLIGNGT</sequence>
<name>CNSN_PENEN</name>
<reference key="1">
    <citation type="journal article" date="2015" name="Mol. Plant Microbe Interact.">
        <title>Genome, transcriptome, and functional analyses of Penicillium expansum provide new insights into secondary metabolism and pathogenicity.</title>
        <authorList>
            <person name="Ballester A.R."/>
            <person name="Marcet-Houben M."/>
            <person name="Levin E."/>
            <person name="Sela N."/>
            <person name="Selma-Lazaro C."/>
            <person name="Carmona L."/>
            <person name="Wisniewski M."/>
            <person name="Droby S."/>
            <person name="Gonzalez-Candelas L."/>
            <person name="Gabaldon T."/>
        </authorList>
    </citation>
    <scope>NUCLEOTIDE SEQUENCE [LARGE SCALE GENOMIC DNA]</scope>
    <source>
        <strain>MD-8</strain>
    </source>
</reference>
<reference key="2">
    <citation type="journal article" date="2015" name="Angew. Chem. Int. Ed.">
        <title>Elucidation of the concise biosynthetic pathway of the communesin indole alkaloids.</title>
        <authorList>
            <person name="Lin H.C."/>
            <person name="Chiou G."/>
            <person name="Chooi Y.H."/>
            <person name="McMahon T.C."/>
            <person name="Xu W."/>
            <person name="Garg N.K."/>
            <person name="Tang Y."/>
        </authorList>
    </citation>
    <scope>IDENTIFICATION</scope>
    <scope>FUNCTION</scope>
</reference>
<evidence type="ECO:0000256" key="1">
    <source>
        <dbReference type="SAM" id="MobiDB-lite"/>
    </source>
</evidence>
<evidence type="ECO:0000269" key="2">
    <source>
    </source>
</evidence>
<evidence type="ECO:0000303" key="3">
    <source>
    </source>
</evidence>
<evidence type="ECO:0000305" key="4"/>
<feature type="chain" id="PRO_0000446470" description="Communesin biosynthesis cluster-specific transcription factor cnsN">
    <location>
        <begin position="1"/>
        <end position="953"/>
    </location>
</feature>
<feature type="region of interest" description="Disordered" evidence="1">
    <location>
        <begin position="371"/>
        <end position="418"/>
    </location>
</feature>
<feature type="compositionally biased region" description="Low complexity" evidence="1">
    <location>
        <begin position="374"/>
        <end position="408"/>
    </location>
</feature>
<dbReference type="EMBL" id="JQFZ01000090">
    <property type="protein sequence ID" value="KGO59707.1"/>
    <property type="molecule type" value="Genomic_DNA"/>
</dbReference>
<dbReference type="RefSeq" id="XP_016600820.1">
    <property type="nucleotide sequence ID" value="XM_016742822.1"/>
</dbReference>
<dbReference type="SMR" id="A0A0A2JW93"/>
<dbReference type="STRING" id="27334.A0A0A2JW93"/>
<dbReference type="GeneID" id="27678241"/>
<dbReference type="VEuPathDB" id="FungiDB:PEXP_030590"/>
<dbReference type="HOGENOM" id="CLU_006632_3_0_1"/>
<dbReference type="Proteomes" id="UP000030143">
    <property type="component" value="Unassembled WGS sequence"/>
</dbReference>
<dbReference type="GO" id="GO:0005634">
    <property type="term" value="C:nucleus"/>
    <property type="evidence" value="ECO:0007669"/>
    <property type="project" value="UniProtKB-SubCell"/>
</dbReference>
<dbReference type="GO" id="GO:0003677">
    <property type="term" value="F:DNA binding"/>
    <property type="evidence" value="ECO:0007669"/>
    <property type="project" value="UniProtKB-KW"/>
</dbReference>
<dbReference type="GO" id="GO:0000981">
    <property type="term" value="F:DNA-binding transcription factor activity, RNA polymerase II-specific"/>
    <property type="evidence" value="ECO:0007669"/>
    <property type="project" value="InterPro"/>
</dbReference>
<dbReference type="GO" id="GO:0016829">
    <property type="term" value="F:lyase activity"/>
    <property type="evidence" value="ECO:0007669"/>
    <property type="project" value="InterPro"/>
</dbReference>
<dbReference type="GO" id="GO:0008270">
    <property type="term" value="F:zinc ion binding"/>
    <property type="evidence" value="ECO:0007669"/>
    <property type="project" value="InterPro"/>
</dbReference>
<dbReference type="GO" id="GO:0006351">
    <property type="term" value="P:DNA-templated transcription"/>
    <property type="evidence" value="ECO:0007669"/>
    <property type="project" value="InterPro"/>
</dbReference>
<dbReference type="GO" id="GO:0001080">
    <property type="term" value="P:nitrogen catabolite activation of transcription from RNA polymerase II promoter"/>
    <property type="evidence" value="ECO:0007669"/>
    <property type="project" value="TreeGrafter"/>
</dbReference>
<dbReference type="CDD" id="cd00408">
    <property type="entry name" value="DHDPS-like"/>
    <property type="match status" value="1"/>
</dbReference>
<dbReference type="CDD" id="cd12148">
    <property type="entry name" value="fungal_TF_MHR"/>
    <property type="match status" value="1"/>
</dbReference>
<dbReference type="CDD" id="cd00067">
    <property type="entry name" value="GAL4"/>
    <property type="match status" value="1"/>
</dbReference>
<dbReference type="Gene3D" id="3.20.20.70">
    <property type="entry name" value="Aldolase class I"/>
    <property type="match status" value="1"/>
</dbReference>
<dbReference type="InterPro" id="IPR013785">
    <property type="entry name" value="Aldolase_TIM"/>
</dbReference>
<dbReference type="InterPro" id="IPR050797">
    <property type="entry name" value="Carb_Metab_Trans_Reg"/>
</dbReference>
<dbReference type="InterPro" id="IPR002220">
    <property type="entry name" value="DapA-like"/>
</dbReference>
<dbReference type="InterPro" id="IPR007219">
    <property type="entry name" value="Transcription_factor_dom_fun"/>
</dbReference>
<dbReference type="InterPro" id="IPR001138">
    <property type="entry name" value="Zn2Cys6_DnaBD"/>
</dbReference>
<dbReference type="PANTHER" id="PTHR31668">
    <property type="entry name" value="GLUCOSE TRANSPORT TRANSCRIPTION REGULATOR RGT1-RELATED-RELATED"/>
    <property type="match status" value="1"/>
</dbReference>
<dbReference type="PANTHER" id="PTHR31668:SF4">
    <property type="entry name" value="TRANSCRIPTIONAL ACTIVATOR PROTEIN DAL81"/>
    <property type="match status" value="1"/>
</dbReference>
<dbReference type="Pfam" id="PF00701">
    <property type="entry name" value="DHDPS"/>
    <property type="match status" value="1"/>
</dbReference>
<dbReference type="Pfam" id="PF04082">
    <property type="entry name" value="Fungal_trans"/>
    <property type="match status" value="1"/>
</dbReference>
<dbReference type="PRINTS" id="PR00146">
    <property type="entry name" value="DHPICSNTHASE"/>
</dbReference>
<dbReference type="SMART" id="SM01130">
    <property type="entry name" value="DHDPS"/>
    <property type="match status" value="1"/>
</dbReference>
<dbReference type="SMART" id="SM00906">
    <property type="entry name" value="Fungal_trans"/>
    <property type="match status" value="1"/>
</dbReference>
<dbReference type="SUPFAM" id="SSF51569">
    <property type="entry name" value="Aldolase"/>
    <property type="match status" value="1"/>
</dbReference>
<accession>A0A0A2JW93</accession>
<gene>
    <name evidence="3" type="primary">cnsN</name>
    <name type="ORF">PEX2_055480</name>
</gene>
<organism>
    <name type="scientific">Penicillium expansum</name>
    <name type="common">Blue mold rot fungus</name>
    <dbReference type="NCBI Taxonomy" id="27334"/>
    <lineage>
        <taxon>Eukaryota</taxon>
        <taxon>Fungi</taxon>
        <taxon>Dikarya</taxon>
        <taxon>Ascomycota</taxon>
        <taxon>Pezizomycotina</taxon>
        <taxon>Eurotiomycetes</taxon>
        <taxon>Eurotiomycetidae</taxon>
        <taxon>Eurotiales</taxon>
        <taxon>Aspergillaceae</taxon>
        <taxon>Penicillium</taxon>
    </lineage>
</organism>
<keyword id="KW-0238">DNA-binding</keyword>
<keyword id="KW-0539">Nucleus</keyword>
<keyword id="KW-1185">Reference proteome</keyword>
<keyword id="KW-0804">Transcription</keyword>
<keyword id="KW-0805">Transcription regulation</keyword>
<proteinExistence type="predicted"/>
<comment type="function">
    <text evidence="2">Transcriptional regulator; part of the gene cluster that mediates the biosynthesis of communesins, a prominent class of indole alkaloids with great potential as pharmaceuticals.</text>
</comment>
<comment type="subcellular location">
    <subcellularLocation>
        <location evidence="4">Nucleus</location>
    </subcellularLocation>
</comment>